<name>IF3_BACCZ</name>
<reference key="1">
    <citation type="journal article" date="2006" name="J. Bacteriol.">
        <title>Pathogenomic sequence analysis of Bacillus cereus and Bacillus thuringiensis isolates closely related to Bacillus anthracis.</title>
        <authorList>
            <person name="Han C.S."/>
            <person name="Xie G."/>
            <person name="Challacombe J.F."/>
            <person name="Altherr M.R."/>
            <person name="Bhotika S.S."/>
            <person name="Bruce D."/>
            <person name="Campbell C.S."/>
            <person name="Campbell M.L."/>
            <person name="Chen J."/>
            <person name="Chertkov O."/>
            <person name="Cleland C."/>
            <person name="Dimitrijevic M."/>
            <person name="Doggett N.A."/>
            <person name="Fawcett J.J."/>
            <person name="Glavina T."/>
            <person name="Goodwin L.A."/>
            <person name="Hill K.K."/>
            <person name="Hitchcock P."/>
            <person name="Jackson P.J."/>
            <person name="Keim P."/>
            <person name="Kewalramani A.R."/>
            <person name="Longmire J."/>
            <person name="Lucas S."/>
            <person name="Malfatti S."/>
            <person name="McMurry K."/>
            <person name="Meincke L.J."/>
            <person name="Misra M."/>
            <person name="Moseman B.L."/>
            <person name="Mundt M."/>
            <person name="Munk A.C."/>
            <person name="Okinaka R.T."/>
            <person name="Parson-Quintana B."/>
            <person name="Reilly L.P."/>
            <person name="Richardson P."/>
            <person name="Robinson D.L."/>
            <person name="Rubin E."/>
            <person name="Saunders E."/>
            <person name="Tapia R."/>
            <person name="Tesmer J.G."/>
            <person name="Thayer N."/>
            <person name="Thompson L.S."/>
            <person name="Tice H."/>
            <person name="Ticknor L.O."/>
            <person name="Wills P.L."/>
            <person name="Brettin T.S."/>
            <person name="Gilna P."/>
        </authorList>
    </citation>
    <scope>NUCLEOTIDE SEQUENCE [LARGE SCALE GENOMIC DNA]</scope>
    <source>
        <strain>ZK / E33L</strain>
    </source>
</reference>
<keyword id="KW-0963">Cytoplasm</keyword>
<keyword id="KW-0396">Initiation factor</keyword>
<keyword id="KW-0648">Protein biosynthesis</keyword>
<sequence>MMINEQIRAREVRLVGANGDQLGIKSRNDALDLAANLNLDLVLVAPNAKPPVCRIMDYGKFRFEQQKKEKEQRKNQKVISMKEVRLSPTIDEHDFNTKLRNAIKFLEKGDKVKASIRFKGRAITHKEIGQRVLDRFSEACAEVSTIESKPKMEGRSMFLVLAPKNDK</sequence>
<accession>Q633M1</accession>
<gene>
    <name evidence="1" type="primary">infC</name>
    <name type="ordered locus">BCE33L4317</name>
</gene>
<proteinExistence type="inferred from homology"/>
<dbReference type="EMBL" id="CP000001">
    <property type="protein sequence ID" value="AAU15953.1"/>
    <property type="status" value="ALT_INIT"/>
    <property type="molecule type" value="Genomic_DNA"/>
</dbReference>
<dbReference type="SMR" id="Q633M1"/>
<dbReference type="KEGG" id="bcz:BCE33L4317"/>
<dbReference type="Proteomes" id="UP000002612">
    <property type="component" value="Chromosome"/>
</dbReference>
<dbReference type="GO" id="GO:0005829">
    <property type="term" value="C:cytosol"/>
    <property type="evidence" value="ECO:0007669"/>
    <property type="project" value="TreeGrafter"/>
</dbReference>
<dbReference type="GO" id="GO:0016020">
    <property type="term" value="C:membrane"/>
    <property type="evidence" value="ECO:0007669"/>
    <property type="project" value="TreeGrafter"/>
</dbReference>
<dbReference type="GO" id="GO:0043022">
    <property type="term" value="F:ribosome binding"/>
    <property type="evidence" value="ECO:0007669"/>
    <property type="project" value="TreeGrafter"/>
</dbReference>
<dbReference type="GO" id="GO:0003743">
    <property type="term" value="F:translation initiation factor activity"/>
    <property type="evidence" value="ECO:0007669"/>
    <property type="project" value="UniProtKB-UniRule"/>
</dbReference>
<dbReference type="GO" id="GO:0032790">
    <property type="term" value="P:ribosome disassembly"/>
    <property type="evidence" value="ECO:0007669"/>
    <property type="project" value="TreeGrafter"/>
</dbReference>
<dbReference type="FunFam" id="3.10.20.80:FF:000001">
    <property type="entry name" value="Translation initiation factor IF-3"/>
    <property type="match status" value="1"/>
</dbReference>
<dbReference type="FunFam" id="3.30.110.10:FF:000001">
    <property type="entry name" value="Translation initiation factor IF-3"/>
    <property type="match status" value="1"/>
</dbReference>
<dbReference type="Gene3D" id="3.30.110.10">
    <property type="entry name" value="Translation initiation factor 3 (IF-3), C-terminal domain"/>
    <property type="match status" value="1"/>
</dbReference>
<dbReference type="Gene3D" id="3.10.20.80">
    <property type="entry name" value="Translation initiation factor 3 (IF-3), N-terminal domain"/>
    <property type="match status" value="1"/>
</dbReference>
<dbReference type="HAMAP" id="MF_00080">
    <property type="entry name" value="IF_3"/>
    <property type="match status" value="1"/>
</dbReference>
<dbReference type="InterPro" id="IPR036788">
    <property type="entry name" value="T_IF-3_C_sf"/>
</dbReference>
<dbReference type="InterPro" id="IPR036787">
    <property type="entry name" value="T_IF-3_N_sf"/>
</dbReference>
<dbReference type="InterPro" id="IPR019813">
    <property type="entry name" value="Translation_initiation_fac3_CS"/>
</dbReference>
<dbReference type="InterPro" id="IPR001288">
    <property type="entry name" value="Translation_initiation_fac_3"/>
</dbReference>
<dbReference type="InterPro" id="IPR019815">
    <property type="entry name" value="Translation_initiation_fac_3_C"/>
</dbReference>
<dbReference type="InterPro" id="IPR019814">
    <property type="entry name" value="Translation_initiation_fac_3_N"/>
</dbReference>
<dbReference type="NCBIfam" id="TIGR00168">
    <property type="entry name" value="infC"/>
    <property type="match status" value="1"/>
</dbReference>
<dbReference type="PANTHER" id="PTHR10938">
    <property type="entry name" value="TRANSLATION INITIATION FACTOR IF-3"/>
    <property type="match status" value="1"/>
</dbReference>
<dbReference type="PANTHER" id="PTHR10938:SF0">
    <property type="entry name" value="TRANSLATION INITIATION FACTOR IF-3, MITOCHONDRIAL"/>
    <property type="match status" value="1"/>
</dbReference>
<dbReference type="Pfam" id="PF00707">
    <property type="entry name" value="IF3_C"/>
    <property type="match status" value="1"/>
</dbReference>
<dbReference type="Pfam" id="PF05198">
    <property type="entry name" value="IF3_N"/>
    <property type="match status" value="1"/>
</dbReference>
<dbReference type="SUPFAM" id="SSF55200">
    <property type="entry name" value="Translation initiation factor IF3, C-terminal domain"/>
    <property type="match status" value="1"/>
</dbReference>
<dbReference type="SUPFAM" id="SSF54364">
    <property type="entry name" value="Translation initiation factor IF3, N-terminal domain"/>
    <property type="match status" value="1"/>
</dbReference>
<dbReference type="PROSITE" id="PS00938">
    <property type="entry name" value="IF3"/>
    <property type="match status" value="1"/>
</dbReference>
<comment type="function">
    <text evidence="1">IF-3 binds to the 30S ribosomal subunit and shifts the equilibrium between 70S ribosomes and their 50S and 30S subunits in favor of the free subunits, thus enhancing the availability of 30S subunits on which protein synthesis initiation begins.</text>
</comment>
<comment type="subunit">
    <text evidence="1">Monomer.</text>
</comment>
<comment type="subcellular location">
    <subcellularLocation>
        <location evidence="1">Cytoplasm</location>
    </subcellularLocation>
</comment>
<comment type="similarity">
    <text evidence="1">Belongs to the IF-3 family.</text>
</comment>
<comment type="sequence caution" evidence="2">
    <conflict type="erroneous initiation">
        <sequence resource="EMBL-CDS" id="AAU15953"/>
    </conflict>
</comment>
<feature type="chain" id="PRO_0000177478" description="Translation initiation factor IF-3">
    <location>
        <begin position="1"/>
        <end position="167"/>
    </location>
</feature>
<evidence type="ECO:0000255" key="1">
    <source>
        <dbReference type="HAMAP-Rule" id="MF_00080"/>
    </source>
</evidence>
<evidence type="ECO:0000305" key="2"/>
<organism>
    <name type="scientific">Bacillus cereus (strain ZK / E33L)</name>
    <dbReference type="NCBI Taxonomy" id="288681"/>
    <lineage>
        <taxon>Bacteria</taxon>
        <taxon>Bacillati</taxon>
        <taxon>Bacillota</taxon>
        <taxon>Bacilli</taxon>
        <taxon>Bacillales</taxon>
        <taxon>Bacillaceae</taxon>
        <taxon>Bacillus</taxon>
        <taxon>Bacillus cereus group</taxon>
    </lineage>
</organism>
<protein>
    <recommendedName>
        <fullName evidence="1">Translation initiation factor IF-3</fullName>
    </recommendedName>
</protein>